<evidence type="ECO:0000255" key="1">
    <source>
        <dbReference type="HAMAP-Rule" id="MF_00451"/>
    </source>
</evidence>
<reference key="1">
    <citation type="journal article" date="2007" name="BMC Microbiol.">
        <title>Subtle genetic changes enhance virulence of methicillin resistant and sensitive Staphylococcus aureus.</title>
        <authorList>
            <person name="Highlander S.K."/>
            <person name="Hulten K.G."/>
            <person name="Qin X."/>
            <person name="Jiang H."/>
            <person name="Yerrapragada S."/>
            <person name="Mason E.O. Jr."/>
            <person name="Shang Y."/>
            <person name="Williams T.M."/>
            <person name="Fortunov R.M."/>
            <person name="Liu Y."/>
            <person name="Igboeli O."/>
            <person name="Petrosino J."/>
            <person name="Tirumalai M."/>
            <person name="Uzman A."/>
            <person name="Fox G.E."/>
            <person name="Cardenas A.M."/>
            <person name="Muzny D.M."/>
            <person name="Hemphill L."/>
            <person name="Ding Y."/>
            <person name="Dugan S."/>
            <person name="Blyth P.R."/>
            <person name="Buhay C.J."/>
            <person name="Dinh H.H."/>
            <person name="Hawes A.C."/>
            <person name="Holder M."/>
            <person name="Kovar C.L."/>
            <person name="Lee S.L."/>
            <person name="Liu W."/>
            <person name="Nazareth L.V."/>
            <person name="Wang Q."/>
            <person name="Zhou J."/>
            <person name="Kaplan S.L."/>
            <person name="Weinstock G.M."/>
        </authorList>
    </citation>
    <scope>NUCLEOTIDE SEQUENCE [LARGE SCALE GENOMIC DNA]</scope>
    <source>
        <strain>USA300 / TCH1516</strain>
    </source>
</reference>
<gene>
    <name evidence="1" type="primary">ndk</name>
    <name type="ordered locus">USA300HOU_1406</name>
</gene>
<feature type="chain" id="PRO_1000080983" description="Nucleoside diphosphate kinase">
    <location>
        <begin position="1"/>
        <end position="149"/>
    </location>
</feature>
<feature type="active site" description="Pros-phosphohistidine intermediate" evidence="1">
    <location>
        <position position="115"/>
    </location>
</feature>
<feature type="binding site" evidence="1">
    <location>
        <position position="9"/>
    </location>
    <ligand>
        <name>ATP</name>
        <dbReference type="ChEBI" id="CHEBI:30616"/>
    </ligand>
</feature>
<feature type="binding site" evidence="1">
    <location>
        <position position="57"/>
    </location>
    <ligand>
        <name>ATP</name>
        <dbReference type="ChEBI" id="CHEBI:30616"/>
    </ligand>
</feature>
<feature type="binding site" evidence="1">
    <location>
        <position position="85"/>
    </location>
    <ligand>
        <name>ATP</name>
        <dbReference type="ChEBI" id="CHEBI:30616"/>
    </ligand>
</feature>
<feature type="binding site" evidence="1">
    <location>
        <position position="91"/>
    </location>
    <ligand>
        <name>ATP</name>
        <dbReference type="ChEBI" id="CHEBI:30616"/>
    </ligand>
</feature>
<feature type="binding site" evidence="1">
    <location>
        <position position="102"/>
    </location>
    <ligand>
        <name>ATP</name>
        <dbReference type="ChEBI" id="CHEBI:30616"/>
    </ligand>
</feature>
<feature type="binding site" evidence="1">
    <location>
        <position position="112"/>
    </location>
    <ligand>
        <name>ATP</name>
        <dbReference type="ChEBI" id="CHEBI:30616"/>
    </ligand>
</feature>
<keyword id="KW-0067">ATP-binding</keyword>
<keyword id="KW-0963">Cytoplasm</keyword>
<keyword id="KW-0418">Kinase</keyword>
<keyword id="KW-0460">Magnesium</keyword>
<keyword id="KW-0479">Metal-binding</keyword>
<keyword id="KW-0546">Nucleotide metabolism</keyword>
<keyword id="KW-0547">Nucleotide-binding</keyword>
<keyword id="KW-0597">Phosphoprotein</keyword>
<keyword id="KW-0808">Transferase</keyword>
<organism>
    <name type="scientific">Staphylococcus aureus (strain USA300 / TCH1516)</name>
    <dbReference type="NCBI Taxonomy" id="451516"/>
    <lineage>
        <taxon>Bacteria</taxon>
        <taxon>Bacillati</taxon>
        <taxon>Bacillota</taxon>
        <taxon>Bacilli</taxon>
        <taxon>Bacillales</taxon>
        <taxon>Staphylococcaceae</taxon>
        <taxon>Staphylococcus</taxon>
    </lineage>
</organism>
<dbReference type="EC" id="2.7.4.6" evidence="1"/>
<dbReference type="EMBL" id="CP000730">
    <property type="protein sequence ID" value="ABX29416.1"/>
    <property type="molecule type" value="Genomic_DNA"/>
</dbReference>
<dbReference type="RefSeq" id="WP_000442480.1">
    <property type="nucleotide sequence ID" value="NC_010079.1"/>
</dbReference>
<dbReference type="SMR" id="A8Z448"/>
<dbReference type="GeneID" id="66839658"/>
<dbReference type="KEGG" id="sax:USA300HOU_1406"/>
<dbReference type="HOGENOM" id="CLU_060216_6_3_9"/>
<dbReference type="GO" id="GO:0005737">
    <property type="term" value="C:cytoplasm"/>
    <property type="evidence" value="ECO:0007669"/>
    <property type="project" value="UniProtKB-SubCell"/>
</dbReference>
<dbReference type="GO" id="GO:0005524">
    <property type="term" value="F:ATP binding"/>
    <property type="evidence" value="ECO:0007669"/>
    <property type="project" value="UniProtKB-UniRule"/>
</dbReference>
<dbReference type="GO" id="GO:0046872">
    <property type="term" value="F:metal ion binding"/>
    <property type="evidence" value="ECO:0007669"/>
    <property type="project" value="UniProtKB-KW"/>
</dbReference>
<dbReference type="GO" id="GO:0004550">
    <property type="term" value="F:nucleoside diphosphate kinase activity"/>
    <property type="evidence" value="ECO:0007669"/>
    <property type="project" value="UniProtKB-UniRule"/>
</dbReference>
<dbReference type="GO" id="GO:0006241">
    <property type="term" value="P:CTP biosynthetic process"/>
    <property type="evidence" value="ECO:0007669"/>
    <property type="project" value="UniProtKB-UniRule"/>
</dbReference>
<dbReference type="GO" id="GO:0006183">
    <property type="term" value="P:GTP biosynthetic process"/>
    <property type="evidence" value="ECO:0007669"/>
    <property type="project" value="UniProtKB-UniRule"/>
</dbReference>
<dbReference type="GO" id="GO:0006228">
    <property type="term" value="P:UTP biosynthetic process"/>
    <property type="evidence" value="ECO:0007669"/>
    <property type="project" value="UniProtKB-UniRule"/>
</dbReference>
<dbReference type="CDD" id="cd04413">
    <property type="entry name" value="NDPk_I"/>
    <property type="match status" value="1"/>
</dbReference>
<dbReference type="FunFam" id="3.30.70.141:FF:000002">
    <property type="entry name" value="Nucleoside diphosphate kinase"/>
    <property type="match status" value="1"/>
</dbReference>
<dbReference type="Gene3D" id="3.30.70.141">
    <property type="entry name" value="Nucleoside diphosphate kinase-like domain"/>
    <property type="match status" value="1"/>
</dbReference>
<dbReference type="HAMAP" id="MF_00451">
    <property type="entry name" value="NDP_kinase"/>
    <property type="match status" value="1"/>
</dbReference>
<dbReference type="InterPro" id="IPR034907">
    <property type="entry name" value="NDK-like_dom"/>
</dbReference>
<dbReference type="InterPro" id="IPR036850">
    <property type="entry name" value="NDK-like_dom_sf"/>
</dbReference>
<dbReference type="InterPro" id="IPR001564">
    <property type="entry name" value="Nucleoside_diP_kinase"/>
</dbReference>
<dbReference type="InterPro" id="IPR023005">
    <property type="entry name" value="Nucleoside_diP_kinase_AS"/>
</dbReference>
<dbReference type="NCBIfam" id="NF001908">
    <property type="entry name" value="PRK00668.1"/>
    <property type="match status" value="1"/>
</dbReference>
<dbReference type="PANTHER" id="PTHR11349">
    <property type="entry name" value="NUCLEOSIDE DIPHOSPHATE KINASE"/>
    <property type="match status" value="1"/>
</dbReference>
<dbReference type="Pfam" id="PF00334">
    <property type="entry name" value="NDK"/>
    <property type="match status" value="1"/>
</dbReference>
<dbReference type="PRINTS" id="PR01243">
    <property type="entry name" value="NUCDPKINASE"/>
</dbReference>
<dbReference type="SMART" id="SM00562">
    <property type="entry name" value="NDK"/>
    <property type="match status" value="1"/>
</dbReference>
<dbReference type="SUPFAM" id="SSF54919">
    <property type="entry name" value="Nucleoside diphosphate kinase, NDK"/>
    <property type="match status" value="1"/>
</dbReference>
<dbReference type="PROSITE" id="PS00469">
    <property type="entry name" value="NDPK"/>
    <property type="match status" value="1"/>
</dbReference>
<dbReference type="PROSITE" id="PS51374">
    <property type="entry name" value="NDPK_LIKE"/>
    <property type="match status" value="1"/>
</dbReference>
<sequence>MERTFLMIKPDAVQRNLIGEVISRIERKGLKLVGGKLMQVPMELAETHYGEHQGKPFYNDLISFITSAPVFAMVVEGEDAVNVSRHIIGSTNPSEASPGSIRGDLGLTVGRNIIHGSDSLESAEREINLWFNENEITSYASPRDAWLYE</sequence>
<protein>
    <recommendedName>
        <fullName evidence="1">Nucleoside diphosphate kinase</fullName>
        <shortName evidence="1">NDK</shortName>
        <shortName evidence="1">NDP kinase</shortName>
        <ecNumber evidence="1">2.7.4.6</ecNumber>
    </recommendedName>
    <alternativeName>
        <fullName evidence="1">Nucleoside-2-P kinase</fullName>
    </alternativeName>
</protein>
<name>NDK_STAAT</name>
<accession>A8Z448</accession>
<proteinExistence type="inferred from homology"/>
<comment type="function">
    <text evidence="1">Major role in the synthesis of nucleoside triphosphates other than ATP. The ATP gamma phosphate is transferred to the NDP beta phosphate via a ping-pong mechanism, using a phosphorylated active-site intermediate.</text>
</comment>
<comment type="catalytic activity">
    <reaction evidence="1">
        <text>a 2'-deoxyribonucleoside 5'-diphosphate + ATP = a 2'-deoxyribonucleoside 5'-triphosphate + ADP</text>
        <dbReference type="Rhea" id="RHEA:44640"/>
        <dbReference type="ChEBI" id="CHEBI:30616"/>
        <dbReference type="ChEBI" id="CHEBI:61560"/>
        <dbReference type="ChEBI" id="CHEBI:73316"/>
        <dbReference type="ChEBI" id="CHEBI:456216"/>
        <dbReference type="EC" id="2.7.4.6"/>
    </reaction>
</comment>
<comment type="catalytic activity">
    <reaction evidence="1">
        <text>a ribonucleoside 5'-diphosphate + ATP = a ribonucleoside 5'-triphosphate + ADP</text>
        <dbReference type="Rhea" id="RHEA:18113"/>
        <dbReference type="ChEBI" id="CHEBI:30616"/>
        <dbReference type="ChEBI" id="CHEBI:57930"/>
        <dbReference type="ChEBI" id="CHEBI:61557"/>
        <dbReference type="ChEBI" id="CHEBI:456216"/>
        <dbReference type="EC" id="2.7.4.6"/>
    </reaction>
</comment>
<comment type="cofactor">
    <cofactor evidence="1">
        <name>Mg(2+)</name>
        <dbReference type="ChEBI" id="CHEBI:18420"/>
    </cofactor>
</comment>
<comment type="subunit">
    <text evidence="1">Homotetramer.</text>
</comment>
<comment type="subcellular location">
    <subcellularLocation>
        <location evidence="1">Cytoplasm</location>
    </subcellularLocation>
</comment>
<comment type="similarity">
    <text evidence="1">Belongs to the NDK family.</text>
</comment>